<dbReference type="EC" id="7.1.1.-" evidence="1"/>
<dbReference type="EMBL" id="CP000911">
    <property type="protein sequence ID" value="ABY37919.1"/>
    <property type="molecule type" value="Genomic_DNA"/>
</dbReference>
<dbReference type="RefSeq" id="WP_002963947.1">
    <property type="nucleotide sequence ID" value="NC_010169.1"/>
</dbReference>
<dbReference type="SMR" id="B0CLD9"/>
<dbReference type="GeneID" id="97533881"/>
<dbReference type="KEGG" id="bmt:BSUIS_A0851"/>
<dbReference type="HOGENOM" id="CLU_144724_2_0_5"/>
<dbReference type="Proteomes" id="UP000008545">
    <property type="component" value="Chromosome I"/>
</dbReference>
<dbReference type="GO" id="GO:0030964">
    <property type="term" value="C:NADH dehydrogenase complex"/>
    <property type="evidence" value="ECO:0007669"/>
    <property type="project" value="TreeGrafter"/>
</dbReference>
<dbReference type="GO" id="GO:0005886">
    <property type="term" value="C:plasma membrane"/>
    <property type="evidence" value="ECO:0007669"/>
    <property type="project" value="UniProtKB-SubCell"/>
</dbReference>
<dbReference type="GO" id="GO:0050136">
    <property type="term" value="F:NADH:ubiquinone reductase (non-electrogenic) activity"/>
    <property type="evidence" value="ECO:0007669"/>
    <property type="project" value="UniProtKB-UniRule"/>
</dbReference>
<dbReference type="GO" id="GO:0048038">
    <property type="term" value="F:quinone binding"/>
    <property type="evidence" value="ECO:0007669"/>
    <property type="project" value="UniProtKB-KW"/>
</dbReference>
<dbReference type="GO" id="GO:0042773">
    <property type="term" value="P:ATP synthesis coupled electron transport"/>
    <property type="evidence" value="ECO:0007669"/>
    <property type="project" value="InterPro"/>
</dbReference>
<dbReference type="FunFam" id="1.10.287.3510:FF:000001">
    <property type="entry name" value="NADH-quinone oxidoreductase subunit K"/>
    <property type="match status" value="1"/>
</dbReference>
<dbReference type="Gene3D" id="1.10.287.3510">
    <property type="match status" value="1"/>
</dbReference>
<dbReference type="HAMAP" id="MF_01456">
    <property type="entry name" value="NDH1_NuoK"/>
    <property type="match status" value="1"/>
</dbReference>
<dbReference type="InterPro" id="IPR001133">
    <property type="entry name" value="NADH_UbQ_OxRdtase_chain4L/K"/>
</dbReference>
<dbReference type="InterPro" id="IPR039428">
    <property type="entry name" value="NUOK/Mnh_C1-like"/>
</dbReference>
<dbReference type="NCBIfam" id="NF004320">
    <property type="entry name" value="PRK05715.1-2"/>
    <property type="match status" value="1"/>
</dbReference>
<dbReference type="NCBIfam" id="NF004321">
    <property type="entry name" value="PRK05715.1-3"/>
    <property type="match status" value="1"/>
</dbReference>
<dbReference type="NCBIfam" id="NF004323">
    <property type="entry name" value="PRK05715.1-5"/>
    <property type="match status" value="1"/>
</dbReference>
<dbReference type="PANTHER" id="PTHR11434:SF21">
    <property type="entry name" value="NADH DEHYDROGENASE SUBUNIT 4L-RELATED"/>
    <property type="match status" value="1"/>
</dbReference>
<dbReference type="PANTHER" id="PTHR11434">
    <property type="entry name" value="NADH-UBIQUINONE OXIDOREDUCTASE SUBUNIT ND4L"/>
    <property type="match status" value="1"/>
</dbReference>
<dbReference type="Pfam" id="PF00420">
    <property type="entry name" value="Oxidored_q2"/>
    <property type="match status" value="1"/>
</dbReference>
<evidence type="ECO:0000255" key="1">
    <source>
        <dbReference type="HAMAP-Rule" id="MF_01456"/>
    </source>
</evidence>
<feature type="chain" id="PRO_0000389978" description="NADH-quinone oxidoreductase subunit K">
    <location>
        <begin position="1"/>
        <end position="102"/>
    </location>
</feature>
<feature type="transmembrane region" description="Helical" evidence="1">
    <location>
        <begin position="5"/>
        <end position="25"/>
    </location>
</feature>
<feature type="transmembrane region" description="Helical" evidence="1">
    <location>
        <begin position="31"/>
        <end position="51"/>
    </location>
</feature>
<feature type="transmembrane region" description="Helical" evidence="1">
    <location>
        <begin position="66"/>
        <end position="86"/>
    </location>
</feature>
<gene>
    <name evidence="1" type="primary">nuoK</name>
    <name type="ordered locus">BSUIS_A0851</name>
</gene>
<accession>B0CLD9</accession>
<sequence>MEIGIAHYLTVSAILFTLGVFGIFLNRKNVIVILMSIELILLSVNLNFVAFSSQLGDLVGQVFALFVLTVAAAEAAIGLAILVVFFRNRGSIAVEDVNVMKG</sequence>
<reference key="1">
    <citation type="submission" date="2007-12" db="EMBL/GenBank/DDBJ databases">
        <title>Brucella suis ATCC 23445 whole genome shotgun sequencing project.</title>
        <authorList>
            <person name="Setubal J.C."/>
            <person name="Bowns C."/>
            <person name="Boyle S."/>
            <person name="Crasta O.R."/>
            <person name="Czar M.J."/>
            <person name="Dharmanolla C."/>
            <person name="Gillespie J.J."/>
            <person name="Kenyon R.W."/>
            <person name="Lu J."/>
            <person name="Mane S."/>
            <person name="Mohapatra S."/>
            <person name="Nagrani S."/>
            <person name="Purkayastha A."/>
            <person name="Rajasimha H.K."/>
            <person name="Shallom J.M."/>
            <person name="Shallom S."/>
            <person name="Shukla M."/>
            <person name="Snyder E.E."/>
            <person name="Sobral B.W."/>
            <person name="Wattam A.R."/>
            <person name="Will R."/>
            <person name="Williams K."/>
            <person name="Yoo H."/>
            <person name="Bruce D."/>
            <person name="Detter C."/>
            <person name="Munk C."/>
            <person name="Brettin T.S."/>
        </authorList>
    </citation>
    <scope>NUCLEOTIDE SEQUENCE [LARGE SCALE GENOMIC DNA]</scope>
    <source>
        <strain>ATCC 23445 / NCTC 10510</strain>
    </source>
</reference>
<organism>
    <name type="scientific">Brucella suis (strain ATCC 23445 / NCTC 10510)</name>
    <dbReference type="NCBI Taxonomy" id="470137"/>
    <lineage>
        <taxon>Bacteria</taxon>
        <taxon>Pseudomonadati</taxon>
        <taxon>Pseudomonadota</taxon>
        <taxon>Alphaproteobacteria</taxon>
        <taxon>Hyphomicrobiales</taxon>
        <taxon>Brucellaceae</taxon>
        <taxon>Brucella/Ochrobactrum group</taxon>
        <taxon>Brucella</taxon>
    </lineage>
</organism>
<proteinExistence type="inferred from homology"/>
<keyword id="KW-0997">Cell inner membrane</keyword>
<keyword id="KW-1003">Cell membrane</keyword>
<keyword id="KW-0472">Membrane</keyword>
<keyword id="KW-0520">NAD</keyword>
<keyword id="KW-0874">Quinone</keyword>
<keyword id="KW-1278">Translocase</keyword>
<keyword id="KW-0812">Transmembrane</keyword>
<keyword id="KW-1133">Transmembrane helix</keyword>
<keyword id="KW-0813">Transport</keyword>
<keyword id="KW-0830">Ubiquinone</keyword>
<protein>
    <recommendedName>
        <fullName evidence="1">NADH-quinone oxidoreductase subunit K</fullName>
        <ecNumber evidence="1">7.1.1.-</ecNumber>
    </recommendedName>
    <alternativeName>
        <fullName evidence="1">NADH dehydrogenase I subunit K</fullName>
    </alternativeName>
    <alternativeName>
        <fullName evidence="1">NDH-1 subunit K</fullName>
    </alternativeName>
</protein>
<name>NUOK_BRUSI</name>
<comment type="function">
    <text evidence="1">NDH-1 shuttles electrons from NADH, via FMN and iron-sulfur (Fe-S) centers, to quinones in the respiratory chain. The immediate electron acceptor for the enzyme in this species is believed to be ubiquinone. Couples the redox reaction to proton translocation (for every two electrons transferred, four hydrogen ions are translocated across the cytoplasmic membrane), and thus conserves the redox energy in a proton gradient.</text>
</comment>
<comment type="catalytic activity">
    <reaction evidence="1">
        <text>a quinone + NADH + 5 H(+)(in) = a quinol + NAD(+) + 4 H(+)(out)</text>
        <dbReference type="Rhea" id="RHEA:57888"/>
        <dbReference type="ChEBI" id="CHEBI:15378"/>
        <dbReference type="ChEBI" id="CHEBI:24646"/>
        <dbReference type="ChEBI" id="CHEBI:57540"/>
        <dbReference type="ChEBI" id="CHEBI:57945"/>
        <dbReference type="ChEBI" id="CHEBI:132124"/>
    </reaction>
</comment>
<comment type="subunit">
    <text evidence="1">NDH-1 is composed of 14 different subunits. Subunits NuoA, H, J, K, L, M, N constitute the membrane sector of the complex.</text>
</comment>
<comment type="subcellular location">
    <subcellularLocation>
        <location evidence="1">Cell inner membrane</location>
        <topology evidence="1">Multi-pass membrane protein</topology>
    </subcellularLocation>
</comment>
<comment type="similarity">
    <text evidence="1">Belongs to the complex I subunit 4L family.</text>
</comment>